<protein>
    <recommendedName>
        <fullName evidence="7">FAD-dependent monooxygenase nscC</fullName>
        <ecNumber evidence="9">1.-.-.-</ecNumber>
    </recommendedName>
    <alternativeName>
        <fullName evidence="7">Neosartoricin B biosynthesis protein C</fullName>
    </alternativeName>
</protein>
<accession>D4AWH1</accession>
<proteinExistence type="inferred from homology"/>
<organism>
    <name type="scientific">Arthroderma benhamiae (strain ATCC MYA-4681 / CBS 112371)</name>
    <name type="common">Trichophyton mentagrophytes</name>
    <dbReference type="NCBI Taxonomy" id="663331"/>
    <lineage>
        <taxon>Eukaryota</taxon>
        <taxon>Fungi</taxon>
        <taxon>Dikarya</taxon>
        <taxon>Ascomycota</taxon>
        <taxon>Pezizomycotina</taxon>
        <taxon>Eurotiomycetes</taxon>
        <taxon>Eurotiomycetidae</taxon>
        <taxon>Onygenales</taxon>
        <taxon>Arthrodermataceae</taxon>
        <taxon>Trichophyton</taxon>
    </lineage>
</organism>
<evidence type="ECO:0000250" key="1">
    <source>
        <dbReference type="UniProtKB" id="A1D8J0"/>
    </source>
</evidence>
<evidence type="ECO:0000250" key="2">
    <source>
        <dbReference type="UniProtKB" id="B8M9J8"/>
    </source>
</evidence>
<evidence type="ECO:0000250" key="3">
    <source>
        <dbReference type="UniProtKB" id="F2S701"/>
    </source>
</evidence>
<evidence type="ECO:0000255" key="4"/>
<evidence type="ECO:0000255" key="5">
    <source>
        <dbReference type="PROSITE-ProRule" id="PRU00498"/>
    </source>
</evidence>
<evidence type="ECO:0000269" key="6">
    <source>
    </source>
</evidence>
<evidence type="ECO:0000303" key="7">
    <source>
    </source>
</evidence>
<evidence type="ECO:0000305" key="8"/>
<evidence type="ECO:0000305" key="9">
    <source>
    </source>
</evidence>
<name>NSCC_ARTBC</name>
<comment type="function">
    <text evidence="1 3 6">FAD-dependent monooxygenase; part of the gene cluster that mediates the biosynthesis of neosartoricin B, a prenylated anthracenone that probably exhibits T-cell antiproliferative activity, suggestive of a physiological role as an immunosuppressive agent (PubMed:23758576). The non-reducing polyketide synthase nscA probably synthesizes and cyclizes the decaketide backbone (By similarity). The hydrolase nscB then mediates the product release through hydrolysis followed by spontaneous decarboxylation (By similarity). The prenyltransferase nscD catalyzes the addition of the dimethylallyl group to the aromatic C5 (By similarity). The FAD-dependent monooxygenase nscC is then responsible for the stereospecific hydroxylation at C2 (By similarity). Neosartoricin B can be converted into two additional compounds neosartoricins C and D (By similarity). Neosartoricin C is a spirocyclic compound that is cyclized through the attack of C3 hydroxyl on C14, followed by dehydration (By similarity). On the other hand, neosartoricin D is a further cyclized compound in which attack of C2 on C14 in neosartoricin C results in the formation of the acetal-containing dioxabicyclo-octanone ring (By similarity). Both of these compounds are novel and possibly represent related metabolites of the gene cluster (By similarity).</text>
</comment>
<comment type="cofactor">
    <cofactor evidence="8">
        <name>FAD</name>
        <dbReference type="ChEBI" id="CHEBI:57692"/>
    </cofactor>
</comment>
<comment type="pathway">
    <text evidence="9">Secondary metabolite biosynthesis.</text>
</comment>
<comment type="similarity">
    <text evidence="8">Belongs to the paxM FAD-dependent monooxygenase family.</text>
</comment>
<dbReference type="EC" id="1.-.-.-" evidence="9"/>
<dbReference type="EMBL" id="ABSU01000014">
    <property type="protein sequence ID" value="EFE32711.1"/>
    <property type="molecule type" value="Genomic_DNA"/>
</dbReference>
<dbReference type="RefSeq" id="XP_003013351.1">
    <property type="nucleotide sequence ID" value="XM_003013305.1"/>
</dbReference>
<dbReference type="SMR" id="D4AWH1"/>
<dbReference type="STRING" id="663331.D4AWH1"/>
<dbReference type="GlyCosmos" id="D4AWH1">
    <property type="glycosylation" value="3 sites, No reported glycans"/>
</dbReference>
<dbReference type="GeneID" id="9519386"/>
<dbReference type="KEGG" id="abe:ARB_00536"/>
<dbReference type="eggNOG" id="KOG2614">
    <property type="taxonomic scope" value="Eukaryota"/>
</dbReference>
<dbReference type="HOGENOM" id="CLU_040697_0_0_1"/>
<dbReference type="OMA" id="IPLIHYH"/>
<dbReference type="OrthoDB" id="47494at2759"/>
<dbReference type="Proteomes" id="UP000008866">
    <property type="component" value="Unassembled WGS sequence"/>
</dbReference>
<dbReference type="GO" id="GO:0004497">
    <property type="term" value="F:monooxygenase activity"/>
    <property type="evidence" value="ECO:0007669"/>
    <property type="project" value="UniProtKB-KW"/>
</dbReference>
<dbReference type="Gene3D" id="3.50.50.60">
    <property type="entry name" value="FAD/NAD(P)-binding domain"/>
    <property type="match status" value="1"/>
</dbReference>
<dbReference type="InterPro" id="IPR036188">
    <property type="entry name" value="FAD/NAD-bd_sf"/>
</dbReference>
<dbReference type="PANTHER" id="PTHR47178:SF4">
    <property type="entry name" value="FAD-DEPENDENT MONOOXYGENASE APTC"/>
    <property type="match status" value="1"/>
</dbReference>
<dbReference type="PANTHER" id="PTHR47178">
    <property type="entry name" value="MONOOXYGENASE, FAD-BINDING"/>
    <property type="match status" value="1"/>
</dbReference>
<dbReference type="PRINTS" id="PR00420">
    <property type="entry name" value="RNGMNOXGNASE"/>
</dbReference>
<dbReference type="SUPFAM" id="SSF51905">
    <property type="entry name" value="FAD/NAD(P)-binding domain"/>
    <property type="match status" value="1"/>
</dbReference>
<gene>
    <name evidence="7" type="primary">nscC</name>
    <name type="ORF">ARB_00536</name>
</gene>
<reference key="1">
    <citation type="journal article" date="2011" name="Genome Biol.">
        <title>Comparative and functional genomics provide insights into the pathogenicity of dermatophytic fungi.</title>
        <authorList>
            <person name="Burmester A."/>
            <person name="Shelest E."/>
            <person name="Gloeckner G."/>
            <person name="Heddergott C."/>
            <person name="Schindler S."/>
            <person name="Staib P."/>
            <person name="Heidel A."/>
            <person name="Felder M."/>
            <person name="Petzold A."/>
            <person name="Szafranski K."/>
            <person name="Feuermann M."/>
            <person name="Pedruzzi I."/>
            <person name="Priebe S."/>
            <person name="Groth M."/>
            <person name="Winkler R."/>
            <person name="Li W."/>
            <person name="Kniemeyer O."/>
            <person name="Schroeckh V."/>
            <person name="Hertweck C."/>
            <person name="Hube B."/>
            <person name="White T.C."/>
            <person name="Platzer M."/>
            <person name="Guthke R."/>
            <person name="Heitman J."/>
            <person name="Woestemeyer J."/>
            <person name="Zipfel P.F."/>
            <person name="Monod M."/>
            <person name="Brakhage A.A."/>
        </authorList>
    </citation>
    <scope>NUCLEOTIDE SEQUENCE [LARGE SCALE GENOMIC DNA]</scope>
    <source>
        <strain>ATCC MYA-4681 / CBS 112371</strain>
    </source>
</reference>
<reference key="2">
    <citation type="journal article" date="2013" name="ACS Synth. Biol.">
        <title>Discovery of cryptic polyketide metabolites from dermatophytes using heterologous expression in Aspergillus nidulans.</title>
        <authorList>
            <person name="Yin W.B."/>
            <person name="Chooi Y.H."/>
            <person name="Smith A.R."/>
            <person name="Cacho R.A."/>
            <person name="Hu Y."/>
            <person name="White T.C."/>
            <person name="Tang Y."/>
        </authorList>
    </citation>
    <scope>FUNCTION</scope>
</reference>
<keyword id="KW-0274">FAD</keyword>
<keyword id="KW-0285">Flavoprotein</keyword>
<keyword id="KW-0325">Glycoprotein</keyword>
<keyword id="KW-0503">Monooxygenase</keyword>
<keyword id="KW-0560">Oxidoreductase</keyword>
<keyword id="KW-1185">Reference proteome</keyword>
<keyword id="KW-0732">Signal</keyword>
<feature type="signal peptide" evidence="4">
    <location>
        <begin position="1"/>
        <end position="21"/>
    </location>
</feature>
<feature type="chain" id="PRO_0000437910" description="FAD-dependent monooxygenase nscC">
    <location>
        <begin position="22"/>
        <end position="412"/>
    </location>
</feature>
<feature type="binding site" evidence="2">
    <location>
        <position position="35"/>
    </location>
    <ligand>
        <name>FAD</name>
        <dbReference type="ChEBI" id="CHEBI:57692"/>
    </ligand>
</feature>
<feature type="binding site" evidence="2">
    <location>
        <position position="46"/>
    </location>
    <ligand>
        <name>FAD</name>
        <dbReference type="ChEBI" id="CHEBI:57692"/>
    </ligand>
</feature>
<feature type="binding site" evidence="2">
    <location>
        <position position="119"/>
    </location>
    <ligand>
        <name>FAD</name>
        <dbReference type="ChEBI" id="CHEBI:57692"/>
    </ligand>
</feature>
<feature type="binding site" evidence="2">
    <location>
        <position position="326"/>
    </location>
    <ligand>
        <name>FAD</name>
        <dbReference type="ChEBI" id="CHEBI:57692"/>
    </ligand>
</feature>
<feature type="binding site" evidence="2">
    <location>
        <position position="339"/>
    </location>
    <ligand>
        <name>FAD</name>
        <dbReference type="ChEBI" id="CHEBI:57692"/>
    </ligand>
</feature>
<feature type="glycosylation site" description="N-linked (GlcNAc...) asparagine" evidence="5">
    <location>
        <position position="92"/>
    </location>
</feature>
<feature type="glycosylation site" description="N-linked (GlcNAc...) asparagine" evidence="5">
    <location>
        <position position="170"/>
    </location>
</feature>
<feature type="glycosylation site" description="N-linked (GlcNAc...) asparagine" evidence="5">
    <location>
        <position position="231"/>
    </location>
</feature>
<sequence>MGKQQETILIIGAGIAGLTTSRLLTNNGIPNVVFEASTPDRSQGFAISLQEFGYSALLAALGDLPFSSLIRGVAPDRQIGGSGWIDQALRDNRTGEVLVAPDLTTAKQTIVRANRNALRHWIADCGEDELDVRYGHKLQRIEGRLGDVTAVFENNARYKGSLIIAADGVNSTVRSQILPNVVPETIPLIHYHGEFQLPHSAFDELIRPHSRQSNILVGVGDRFNTPLSICNITKSQVHLDWSYSRTVKGENDILYRPNVPSEEAKQIPPALLEELDTLCLAEPWKSFLNSESVKTHRVFHWTTRCVYITQDDARHAGEQGVVFVGDSWHAMPIFGGEGGNHALLDGVELADAIITSTSNSGKGSWDNVVKNYYGGAWKRSQDAVRRSTQRFFLLHRPATEWKEISEKKKQIA</sequence>